<proteinExistence type="inferred from homology"/>
<protein>
    <recommendedName>
        <fullName evidence="1">S-adenosylmethionine:tRNA ribosyltransferase-isomerase</fullName>
        <ecNumber evidence="1">2.4.99.17</ecNumber>
    </recommendedName>
    <alternativeName>
        <fullName evidence="1">Queuosine biosynthesis protein QueA</fullName>
    </alternativeName>
</protein>
<accession>Q3SRN4</accession>
<gene>
    <name evidence="1" type="primary">queA</name>
    <name type="ordered locus">Nwi_1796</name>
</gene>
<feature type="chain" id="PRO_0000231351" description="S-adenosylmethionine:tRNA ribosyltransferase-isomerase">
    <location>
        <begin position="1"/>
        <end position="360"/>
    </location>
</feature>
<dbReference type="EC" id="2.4.99.17" evidence="1"/>
<dbReference type="EMBL" id="CP000115">
    <property type="protein sequence ID" value="ABA05057.1"/>
    <property type="molecule type" value="Genomic_DNA"/>
</dbReference>
<dbReference type="RefSeq" id="WP_011315053.1">
    <property type="nucleotide sequence ID" value="NC_007406.1"/>
</dbReference>
<dbReference type="SMR" id="Q3SRN4"/>
<dbReference type="STRING" id="323098.Nwi_1796"/>
<dbReference type="KEGG" id="nwi:Nwi_1796"/>
<dbReference type="eggNOG" id="COG0809">
    <property type="taxonomic scope" value="Bacteria"/>
</dbReference>
<dbReference type="HOGENOM" id="CLU_039110_1_1_5"/>
<dbReference type="OrthoDB" id="9805933at2"/>
<dbReference type="UniPathway" id="UPA00392"/>
<dbReference type="Proteomes" id="UP000002531">
    <property type="component" value="Chromosome"/>
</dbReference>
<dbReference type="GO" id="GO:0005737">
    <property type="term" value="C:cytoplasm"/>
    <property type="evidence" value="ECO:0007669"/>
    <property type="project" value="UniProtKB-SubCell"/>
</dbReference>
<dbReference type="GO" id="GO:0051075">
    <property type="term" value="F:S-adenosylmethionine:tRNA ribosyltransferase-isomerase activity"/>
    <property type="evidence" value="ECO:0007669"/>
    <property type="project" value="UniProtKB-EC"/>
</dbReference>
<dbReference type="GO" id="GO:0008616">
    <property type="term" value="P:queuosine biosynthetic process"/>
    <property type="evidence" value="ECO:0007669"/>
    <property type="project" value="UniProtKB-UniRule"/>
</dbReference>
<dbReference type="GO" id="GO:0002099">
    <property type="term" value="P:tRNA wobble guanine modification"/>
    <property type="evidence" value="ECO:0007669"/>
    <property type="project" value="TreeGrafter"/>
</dbReference>
<dbReference type="FunFam" id="3.40.1780.10:FF:000001">
    <property type="entry name" value="S-adenosylmethionine:tRNA ribosyltransferase-isomerase"/>
    <property type="match status" value="1"/>
</dbReference>
<dbReference type="Gene3D" id="2.40.10.240">
    <property type="entry name" value="QueA-like"/>
    <property type="match status" value="1"/>
</dbReference>
<dbReference type="Gene3D" id="3.40.1780.10">
    <property type="entry name" value="QueA-like"/>
    <property type="match status" value="1"/>
</dbReference>
<dbReference type="HAMAP" id="MF_00113">
    <property type="entry name" value="QueA"/>
    <property type="match status" value="1"/>
</dbReference>
<dbReference type="InterPro" id="IPR003699">
    <property type="entry name" value="QueA"/>
</dbReference>
<dbReference type="InterPro" id="IPR042118">
    <property type="entry name" value="QueA_dom1"/>
</dbReference>
<dbReference type="InterPro" id="IPR042119">
    <property type="entry name" value="QueA_dom2"/>
</dbReference>
<dbReference type="InterPro" id="IPR036100">
    <property type="entry name" value="QueA_sf"/>
</dbReference>
<dbReference type="NCBIfam" id="NF001140">
    <property type="entry name" value="PRK00147.1"/>
    <property type="match status" value="1"/>
</dbReference>
<dbReference type="NCBIfam" id="TIGR00113">
    <property type="entry name" value="queA"/>
    <property type="match status" value="1"/>
</dbReference>
<dbReference type="PANTHER" id="PTHR30307">
    <property type="entry name" value="S-ADENOSYLMETHIONINE:TRNA RIBOSYLTRANSFERASE-ISOMERASE"/>
    <property type="match status" value="1"/>
</dbReference>
<dbReference type="PANTHER" id="PTHR30307:SF0">
    <property type="entry name" value="S-ADENOSYLMETHIONINE:TRNA RIBOSYLTRANSFERASE-ISOMERASE"/>
    <property type="match status" value="1"/>
</dbReference>
<dbReference type="Pfam" id="PF02547">
    <property type="entry name" value="Queuosine_synth"/>
    <property type="match status" value="1"/>
</dbReference>
<dbReference type="SUPFAM" id="SSF111337">
    <property type="entry name" value="QueA-like"/>
    <property type="match status" value="1"/>
</dbReference>
<evidence type="ECO:0000255" key="1">
    <source>
        <dbReference type="HAMAP-Rule" id="MF_00113"/>
    </source>
</evidence>
<name>QUEA_NITWN</name>
<organism>
    <name type="scientific">Nitrobacter winogradskyi (strain ATCC 25391 / DSM 10237 / CIP 104748 / NCIMB 11846 / Nb-255)</name>
    <dbReference type="NCBI Taxonomy" id="323098"/>
    <lineage>
        <taxon>Bacteria</taxon>
        <taxon>Pseudomonadati</taxon>
        <taxon>Pseudomonadota</taxon>
        <taxon>Alphaproteobacteria</taxon>
        <taxon>Hyphomicrobiales</taxon>
        <taxon>Nitrobacteraceae</taxon>
        <taxon>Nitrobacter</taxon>
    </lineage>
</organism>
<sequence length="360" mass="39098">MRTDLFDFELPAGSIALRPASPRDSARMLVVQPGSGVRDQQVSDLPEWLRPGDQLVVNDTRVIAAQLHGRRIGREAEPRIDATLIKRLDGSRWSALVRPARKLMAGDIVRLGNEGRVCFLGHLDARVESKGEEGEVTFAFSFHGPMLDQAIAELGSTPLPPYIASKRAPDDRDASDYQTMFATHEGAVAAPTAGLHFTPEIETALRGRGVGLHRITLHVGAGTFLPVKVDDTAGHRMHSEWGAISTETADALNAARSRGGRIVAVGTTSLRLLESAADDDGRIKPFTGETAIFITPGHRFRAVDILMTNFHLPRSTLFMLVSAFSGLETMKQAYAHAISAGYRFYSYGDACLLFPERAGA</sequence>
<keyword id="KW-0963">Cytoplasm</keyword>
<keyword id="KW-0671">Queuosine biosynthesis</keyword>
<keyword id="KW-1185">Reference proteome</keyword>
<keyword id="KW-0949">S-adenosyl-L-methionine</keyword>
<keyword id="KW-0808">Transferase</keyword>
<reference key="1">
    <citation type="journal article" date="2006" name="Appl. Environ. Microbiol.">
        <title>Genome sequence of the chemolithoautotrophic nitrite-oxidizing bacterium Nitrobacter winogradskyi Nb-255.</title>
        <authorList>
            <person name="Starkenburg S.R."/>
            <person name="Chain P.S.G."/>
            <person name="Sayavedra-Soto L.A."/>
            <person name="Hauser L."/>
            <person name="Land M.L."/>
            <person name="Larimer F.W."/>
            <person name="Malfatti S.A."/>
            <person name="Klotz M.G."/>
            <person name="Bottomley P.J."/>
            <person name="Arp D.J."/>
            <person name="Hickey W.J."/>
        </authorList>
    </citation>
    <scope>NUCLEOTIDE SEQUENCE [LARGE SCALE GENOMIC DNA]</scope>
    <source>
        <strain>ATCC 25391 / DSM 10237 / CIP 104748 / NCIMB 11846 / Nb-255</strain>
    </source>
</reference>
<comment type="function">
    <text evidence="1">Transfers and isomerizes the ribose moiety from AdoMet to the 7-aminomethyl group of 7-deazaguanine (preQ1-tRNA) to give epoxyqueuosine (oQ-tRNA).</text>
</comment>
<comment type="catalytic activity">
    <reaction evidence="1">
        <text>7-aminomethyl-7-carbaguanosine(34) in tRNA + S-adenosyl-L-methionine = epoxyqueuosine(34) in tRNA + adenine + L-methionine + 2 H(+)</text>
        <dbReference type="Rhea" id="RHEA:32155"/>
        <dbReference type="Rhea" id="RHEA-COMP:10342"/>
        <dbReference type="Rhea" id="RHEA-COMP:18582"/>
        <dbReference type="ChEBI" id="CHEBI:15378"/>
        <dbReference type="ChEBI" id="CHEBI:16708"/>
        <dbReference type="ChEBI" id="CHEBI:57844"/>
        <dbReference type="ChEBI" id="CHEBI:59789"/>
        <dbReference type="ChEBI" id="CHEBI:82833"/>
        <dbReference type="ChEBI" id="CHEBI:194443"/>
        <dbReference type="EC" id="2.4.99.17"/>
    </reaction>
</comment>
<comment type="pathway">
    <text evidence="1">tRNA modification; tRNA-queuosine biosynthesis.</text>
</comment>
<comment type="subunit">
    <text evidence="1">Monomer.</text>
</comment>
<comment type="subcellular location">
    <subcellularLocation>
        <location evidence="1">Cytoplasm</location>
    </subcellularLocation>
</comment>
<comment type="similarity">
    <text evidence="1">Belongs to the QueA family.</text>
</comment>